<protein>
    <recommendedName>
        <fullName evidence="7">Small ribosomal subunit protein eS27A</fullName>
    </recommendedName>
    <alternativeName>
        <fullName evidence="8">40S ribosomal protein S27-A</fullName>
    </alternativeName>
    <alternativeName>
        <fullName>RP61</fullName>
    </alternativeName>
    <alternativeName>
        <fullName>YS20</fullName>
    </alternativeName>
</protein>
<accession>P35997</accession>
<accession>D6VX42</accession>
<gene>
    <name evidence="8" type="primary">RPS27A</name>
    <name type="ordered locus">YKL156W</name>
</gene>
<keyword id="KW-0002">3D-structure</keyword>
<keyword id="KW-0963">Cytoplasm</keyword>
<keyword id="KW-0479">Metal-binding</keyword>
<keyword id="KW-0488">Methylation</keyword>
<keyword id="KW-1185">Reference proteome</keyword>
<keyword id="KW-0687">Ribonucleoprotein</keyword>
<keyword id="KW-0689">Ribosomal protein</keyword>
<keyword id="KW-0862">Zinc</keyword>
<keyword id="KW-0863">Zinc-finger</keyword>
<organism>
    <name type="scientific">Saccharomyces cerevisiae (strain ATCC 204508 / S288c)</name>
    <name type="common">Baker's yeast</name>
    <dbReference type="NCBI Taxonomy" id="559292"/>
    <lineage>
        <taxon>Eukaryota</taxon>
        <taxon>Fungi</taxon>
        <taxon>Dikarya</taxon>
        <taxon>Ascomycota</taxon>
        <taxon>Saccharomycotina</taxon>
        <taxon>Saccharomycetes</taxon>
        <taxon>Saccharomycetales</taxon>
        <taxon>Saccharomycetaceae</taxon>
        <taxon>Saccharomyces</taxon>
    </lineage>
</organism>
<proteinExistence type="evidence at protein level"/>
<dbReference type="EMBL" id="Z26877">
    <property type="status" value="NOT_ANNOTATED_CDS"/>
    <property type="molecule type" value="Genomic_DNA"/>
</dbReference>
<dbReference type="EMBL" id="Z28156">
    <property type="protein sequence ID" value="CAA81998.1"/>
    <property type="molecule type" value="Genomic_DNA"/>
</dbReference>
<dbReference type="EMBL" id="Z28155">
    <property type="protein sequence ID" value="CAA81997.1"/>
    <property type="molecule type" value="Genomic_DNA"/>
</dbReference>
<dbReference type="EMBL" id="BK006944">
    <property type="protein sequence ID" value="DAA09008.1"/>
    <property type="molecule type" value="Genomic_DNA"/>
</dbReference>
<dbReference type="PIR" id="S37986">
    <property type="entry name" value="S37986"/>
</dbReference>
<dbReference type="RefSeq" id="NP_012766.1">
    <property type="nucleotide sequence ID" value="NM_001179722.1"/>
</dbReference>
<dbReference type="PDB" id="3J6X">
    <property type="method" value="EM"/>
    <property type="resolution" value="6.10 A"/>
    <property type="chains" value="27=1-82"/>
</dbReference>
<dbReference type="PDB" id="3J6Y">
    <property type="method" value="EM"/>
    <property type="resolution" value="6.10 A"/>
    <property type="chains" value="27=1-82"/>
</dbReference>
<dbReference type="PDB" id="3J77">
    <property type="method" value="EM"/>
    <property type="resolution" value="6.20 A"/>
    <property type="chains" value="27=1-82"/>
</dbReference>
<dbReference type="PDB" id="3J78">
    <property type="method" value="EM"/>
    <property type="resolution" value="6.30 A"/>
    <property type="chains" value="27=1-82"/>
</dbReference>
<dbReference type="PDB" id="4U3M">
    <property type="method" value="X-ray"/>
    <property type="resolution" value="3.00 A"/>
    <property type="chains" value="D7/d7=2-82"/>
</dbReference>
<dbReference type="PDB" id="4U3N">
    <property type="method" value="X-ray"/>
    <property type="resolution" value="3.20 A"/>
    <property type="chains" value="D7/d7=2-82"/>
</dbReference>
<dbReference type="PDB" id="4U3U">
    <property type="method" value="X-ray"/>
    <property type="resolution" value="2.90 A"/>
    <property type="chains" value="D7/d7=2-82"/>
</dbReference>
<dbReference type="PDB" id="4U4N">
    <property type="method" value="X-ray"/>
    <property type="resolution" value="3.10 A"/>
    <property type="chains" value="D7/d7=2-82"/>
</dbReference>
<dbReference type="PDB" id="4U4O">
    <property type="method" value="X-ray"/>
    <property type="resolution" value="3.60 A"/>
    <property type="chains" value="D7/d7=2-82"/>
</dbReference>
<dbReference type="PDB" id="4U4Q">
    <property type="method" value="X-ray"/>
    <property type="resolution" value="3.00 A"/>
    <property type="chains" value="D7/d7=2-82"/>
</dbReference>
<dbReference type="PDB" id="4U4R">
    <property type="method" value="X-ray"/>
    <property type="resolution" value="2.80 A"/>
    <property type="chains" value="D7/d7=2-82"/>
</dbReference>
<dbReference type="PDB" id="4U4U">
    <property type="method" value="X-ray"/>
    <property type="resolution" value="3.00 A"/>
    <property type="chains" value="D7/d7=2-82"/>
</dbReference>
<dbReference type="PDB" id="4U4Y">
    <property type="method" value="X-ray"/>
    <property type="resolution" value="3.20 A"/>
    <property type="chains" value="D7/d7=2-82"/>
</dbReference>
<dbReference type="PDB" id="4U4Z">
    <property type="method" value="X-ray"/>
    <property type="resolution" value="3.10 A"/>
    <property type="chains" value="D7/d7=2-82"/>
</dbReference>
<dbReference type="PDB" id="4U50">
    <property type="method" value="X-ray"/>
    <property type="resolution" value="3.20 A"/>
    <property type="chains" value="D7/d7=2-82"/>
</dbReference>
<dbReference type="PDB" id="4U51">
    <property type="method" value="X-ray"/>
    <property type="resolution" value="3.20 A"/>
    <property type="chains" value="D7/d7=2-82"/>
</dbReference>
<dbReference type="PDB" id="4U52">
    <property type="method" value="X-ray"/>
    <property type="resolution" value="3.00 A"/>
    <property type="chains" value="D7/d7=2-82"/>
</dbReference>
<dbReference type="PDB" id="4U53">
    <property type="method" value="X-ray"/>
    <property type="resolution" value="3.30 A"/>
    <property type="chains" value="D7/d7=2-82"/>
</dbReference>
<dbReference type="PDB" id="4U55">
    <property type="method" value="X-ray"/>
    <property type="resolution" value="3.20 A"/>
    <property type="chains" value="D7/d7=2-82"/>
</dbReference>
<dbReference type="PDB" id="4U56">
    <property type="method" value="X-ray"/>
    <property type="resolution" value="3.45 A"/>
    <property type="chains" value="D7/d7=2-82"/>
</dbReference>
<dbReference type="PDB" id="4U6F">
    <property type="method" value="X-ray"/>
    <property type="resolution" value="3.10 A"/>
    <property type="chains" value="D7/d7=2-82"/>
</dbReference>
<dbReference type="PDB" id="4V6I">
    <property type="method" value="EM"/>
    <property type="resolution" value="8.80 A"/>
    <property type="chains" value="AX=1-82"/>
</dbReference>
<dbReference type="PDB" id="4V88">
    <property type="method" value="X-ray"/>
    <property type="resolution" value="3.00 A"/>
    <property type="chains" value="Ab/Cb=1-82"/>
</dbReference>
<dbReference type="PDB" id="4V8Y">
    <property type="method" value="EM"/>
    <property type="resolution" value="4.30 A"/>
    <property type="chains" value="A1=1-82"/>
</dbReference>
<dbReference type="PDB" id="4V8Z">
    <property type="method" value="EM"/>
    <property type="resolution" value="6.60 A"/>
    <property type="chains" value="A1=1-82"/>
</dbReference>
<dbReference type="PDB" id="4V92">
    <property type="method" value="EM"/>
    <property type="resolution" value="3.70 A"/>
    <property type="chains" value="b=2-82"/>
</dbReference>
<dbReference type="PDB" id="5DAT">
    <property type="method" value="X-ray"/>
    <property type="resolution" value="3.15 A"/>
    <property type="chains" value="D7/d7=2-82"/>
</dbReference>
<dbReference type="PDB" id="5DC3">
    <property type="method" value="X-ray"/>
    <property type="resolution" value="3.25 A"/>
    <property type="chains" value="D7/d7=2-82"/>
</dbReference>
<dbReference type="PDB" id="5DGE">
    <property type="method" value="X-ray"/>
    <property type="resolution" value="3.45 A"/>
    <property type="chains" value="D7/d7=2-82"/>
</dbReference>
<dbReference type="PDB" id="5DGF">
    <property type="method" value="X-ray"/>
    <property type="resolution" value="3.30 A"/>
    <property type="chains" value="D7/d7=2-82"/>
</dbReference>
<dbReference type="PDB" id="5DGV">
    <property type="method" value="X-ray"/>
    <property type="resolution" value="3.10 A"/>
    <property type="chains" value="D7/d7=2-82"/>
</dbReference>
<dbReference type="PDB" id="5FCI">
    <property type="method" value="X-ray"/>
    <property type="resolution" value="3.40 A"/>
    <property type="chains" value="D7/d7=2-82"/>
</dbReference>
<dbReference type="PDB" id="5FCJ">
    <property type="method" value="X-ray"/>
    <property type="resolution" value="3.10 A"/>
    <property type="chains" value="D7/d7=2-82"/>
</dbReference>
<dbReference type="PDB" id="5I4L">
    <property type="method" value="X-ray"/>
    <property type="resolution" value="3.10 A"/>
    <property type="chains" value="D7/d7=2-82"/>
</dbReference>
<dbReference type="PDB" id="5JUO">
    <property type="method" value="EM"/>
    <property type="resolution" value="4.00 A"/>
    <property type="chains" value="YB=1-82"/>
</dbReference>
<dbReference type="PDB" id="5JUP">
    <property type="method" value="EM"/>
    <property type="resolution" value="3.50 A"/>
    <property type="chains" value="YB=1-82"/>
</dbReference>
<dbReference type="PDB" id="5JUS">
    <property type="method" value="EM"/>
    <property type="resolution" value="4.20 A"/>
    <property type="chains" value="YB=1-82"/>
</dbReference>
<dbReference type="PDB" id="5JUT">
    <property type="method" value="EM"/>
    <property type="resolution" value="4.00 A"/>
    <property type="chains" value="YB=1-82"/>
</dbReference>
<dbReference type="PDB" id="5JUU">
    <property type="method" value="EM"/>
    <property type="resolution" value="4.00 A"/>
    <property type="chains" value="YB=1-82"/>
</dbReference>
<dbReference type="PDB" id="5LL6">
    <property type="method" value="EM"/>
    <property type="resolution" value="3.90 A"/>
    <property type="chains" value="f=1-82"/>
</dbReference>
<dbReference type="PDB" id="5LYB">
    <property type="method" value="X-ray"/>
    <property type="resolution" value="3.25 A"/>
    <property type="chains" value="D7/d7=2-82"/>
</dbReference>
<dbReference type="PDB" id="5M1J">
    <property type="method" value="EM"/>
    <property type="resolution" value="3.30 A"/>
    <property type="chains" value="b2=2-82"/>
</dbReference>
<dbReference type="PDB" id="5MC6">
    <property type="method" value="EM"/>
    <property type="resolution" value="3.80 A"/>
    <property type="chains" value="f=1-82"/>
</dbReference>
<dbReference type="PDB" id="5MEI">
    <property type="method" value="X-ray"/>
    <property type="resolution" value="3.50 A"/>
    <property type="chains" value="c/d7=2-82"/>
</dbReference>
<dbReference type="PDB" id="5NDG">
    <property type="method" value="X-ray"/>
    <property type="resolution" value="3.70 A"/>
    <property type="chains" value="D7/d7=2-82"/>
</dbReference>
<dbReference type="PDB" id="5NDV">
    <property type="method" value="X-ray"/>
    <property type="resolution" value="3.30 A"/>
    <property type="chains" value="D7/d7=2-82"/>
</dbReference>
<dbReference type="PDB" id="5NDW">
    <property type="method" value="X-ray"/>
    <property type="resolution" value="3.70 A"/>
    <property type="chains" value="D7/d7=2-82"/>
</dbReference>
<dbReference type="PDB" id="5OBM">
    <property type="method" value="X-ray"/>
    <property type="resolution" value="3.40 A"/>
    <property type="chains" value="D7/d7=2-82"/>
</dbReference>
<dbReference type="PDB" id="5ON6">
    <property type="method" value="X-ray"/>
    <property type="resolution" value="3.10 A"/>
    <property type="chains" value="c/d7=2-82"/>
</dbReference>
<dbReference type="PDB" id="5TBW">
    <property type="method" value="X-ray"/>
    <property type="resolution" value="3.00 A"/>
    <property type="chains" value="c/d7=2-82"/>
</dbReference>
<dbReference type="PDB" id="5TGA">
    <property type="method" value="X-ray"/>
    <property type="resolution" value="3.30 A"/>
    <property type="chains" value="D7/d7=2-82"/>
</dbReference>
<dbReference type="PDB" id="5TGM">
    <property type="method" value="X-ray"/>
    <property type="resolution" value="3.50 A"/>
    <property type="chains" value="D7/d7=2-82"/>
</dbReference>
<dbReference type="PDB" id="5WYJ">
    <property type="method" value="EM"/>
    <property type="resolution" value="8.70 A"/>
    <property type="chains" value="Sc=1-82"/>
</dbReference>
<dbReference type="PDB" id="5WYK">
    <property type="method" value="EM"/>
    <property type="resolution" value="4.50 A"/>
    <property type="chains" value="Sc=1-82"/>
</dbReference>
<dbReference type="PDB" id="6EML">
    <property type="method" value="EM"/>
    <property type="resolution" value="3.60 A"/>
    <property type="chains" value="f=1-82"/>
</dbReference>
<dbReference type="PDB" id="6FAI">
    <property type="method" value="EM"/>
    <property type="resolution" value="3.40 A"/>
    <property type="chains" value="b=1-82"/>
</dbReference>
<dbReference type="PDB" id="6GQ1">
    <property type="method" value="EM"/>
    <property type="resolution" value="4.40 A"/>
    <property type="chains" value="AR=2-82"/>
</dbReference>
<dbReference type="PDB" id="6GQB">
    <property type="method" value="EM"/>
    <property type="resolution" value="3.90 A"/>
    <property type="chains" value="AR=2-82"/>
</dbReference>
<dbReference type="PDB" id="6GQV">
    <property type="method" value="EM"/>
    <property type="resolution" value="4.00 A"/>
    <property type="chains" value="AR=2-82"/>
</dbReference>
<dbReference type="PDB" id="6HHQ">
    <property type="method" value="X-ray"/>
    <property type="resolution" value="3.10 A"/>
    <property type="chains" value="c/d7=1-82"/>
</dbReference>
<dbReference type="PDB" id="6I7O">
    <property type="method" value="EM"/>
    <property type="resolution" value="5.30 A"/>
    <property type="chains" value="f/fb=2-82"/>
</dbReference>
<dbReference type="PDB" id="6KE6">
    <property type="method" value="EM"/>
    <property type="resolution" value="3.40 A"/>
    <property type="chains" value="Sc=1-82"/>
</dbReference>
<dbReference type="PDB" id="6LQP">
    <property type="method" value="EM"/>
    <property type="resolution" value="3.20 A"/>
    <property type="chains" value="Sc=1-82"/>
</dbReference>
<dbReference type="PDB" id="6LQQ">
    <property type="method" value="EM"/>
    <property type="resolution" value="4.10 A"/>
    <property type="chains" value="Sc=1-82"/>
</dbReference>
<dbReference type="PDB" id="6LQR">
    <property type="method" value="EM"/>
    <property type="resolution" value="8.60 A"/>
    <property type="chains" value="Sc=1-82"/>
</dbReference>
<dbReference type="PDB" id="6LQS">
    <property type="method" value="EM"/>
    <property type="resolution" value="3.80 A"/>
    <property type="chains" value="Sc=1-82"/>
</dbReference>
<dbReference type="PDB" id="6LQT">
    <property type="method" value="EM"/>
    <property type="resolution" value="4.90 A"/>
    <property type="chains" value="Sc=1-82"/>
</dbReference>
<dbReference type="PDB" id="6Q8Y">
    <property type="method" value="EM"/>
    <property type="resolution" value="3.10 A"/>
    <property type="chains" value="f=2-82"/>
</dbReference>
<dbReference type="PDB" id="6RBD">
    <property type="method" value="EM"/>
    <property type="resolution" value="3.47 A"/>
    <property type="chains" value="b=1-82"/>
</dbReference>
<dbReference type="PDB" id="6RBE">
    <property type="method" value="EM"/>
    <property type="resolution" value="3.80 A"/>
    <property type="chains" value="b=1-82"/>
</dbReference>
<dbReference type="PDB" id="6S47">
    <property type="method" value="EM"/>
    <property type="resolution" value="3.28 A"/>
    <property type="chains" value="Bc=2-82"/>
</dbReference>
<dbReference type="PDB" id="6SNT">
    <property type="method" value="EM"/>
    <property type="resolution" value="2.80 A"/>
    <property type="chains" value="b=1-82"/>
</dbReference>
<dbReference type="PDB" id="6SV4">
    <property type="method" value="EM"/>
    <property type="resolution" value="3.30 A"/>
    <property type="chains" value="f/fb/fc=1-82"/>
</dbReference>
<dbReference type="PDB" id="6T4Q">
    <property type="method" value="EM"/>
    <property type="resolution" value="2.60 A"/>
    <property type="chains" value="Sb=2-82"/>
</dbReference>
<dbReference type="PDB" id="6T7I">
    <property type="method" value="EM"/>
    <property type="resolution" value="3.20 A"/>
    <property type="chains" value="Sb=1-82"/>
</dbReference>
<dbReference type="PDB" id="6T7T">
    <property type="method" value="EM"/>
    <property type="resolution" value="3.10 A"/>
    <property type="chains" value="Sb=1-82"/>
</dbReference>
<dbReference type="PDB" id="6T83">
    <property type="method" value="EM"/>
    <property type="resolution" value="4.00 A"/>
    <property type="chains" value="2/bb=1-82"/>
</dbReference>
<dbReference type="PDB" id="6TB3">
    <property type="method" value="EM"/>
    <property type="resolution" value="2.80 A"/>
    <property type="chains" value="f=2-82"/>
</dbReference>
<dbReference type="PDB" id="6TNU">
    <property type="method" value="EM"/>
    <property type="resolution" value="3.10 A"/>
    <property type="chains" value="f=2-82"/>
</dbReference>
<dbReference type="PDB" id="6WDR">
    <property type="method" value="EM"/>
    <property type="resolution" value="3.70 A"/>
    <property type="chains" value="b=2-82"/>
</dbReference>
<dbReference type="PDB" id="6WOO">
    <property type="method" value="EM"/>
    <property type="resolution" value="2.90 A"/>
    <property type="chains" value="bb=2-82"/>
</dbReference>
<dbReference type="PDB" id="6XIQ">
    <property type="method" value="EM"/>
    <property type="resolution" value="4.20 A"/>
    <property type="chains" value="AR=1-82"/>
</dbReference>
<dbReference type="PDB" id="6XIR">
    <property type="method" value="EM"/>
    <property type="resolution" value="3.20 A"/>
    <property type="chains" value="AR=1-82"/>
</dbReference>
<dbReference type="PDB" id="6Y7C">
    <property type="method" value="EM"/>
    <property type="resolution" value="3.80 A"/>
    <property type="chains" value="b=1-82"/>
</dbReference>
<dbReference type="PDB" id="6Z6J">
    <property type="method" value="EM"/>
    <property type="resolution" value="3.40 A"/>
    <property type="chains" value="Sb=1-82"/>
</dbReference>
<dbReference type="PDB" id="6Z6K">
    <property type="method" value="EM"/>
    <property type="resolution" value="3.40 A"/>
    <property type="chains" value="Sb=1-82"/>
</dbReference>
<dbReference type="PDB" id="6ZCE">
    <property type="method" value="EM"/>
    <property type="resolution" value="5.30 A"/>
    <property type="chains" value="c=1-82"/>
</dbReference>
<dbReference type="PDB" id="6ZQA">
    <property type="method" value="EM"/>
    <property type="resolution" value="4.40 A"/>
    <property type="chains" value="Db=1-82"/>
</dbReference>
<dbReference type="PDB" id="6ZQB">
    <property type="method" value="EM"/>
    <property type="resolution" value="3.90 A"/>
    <property type="chains" value="Db=1-82"/>
</dbReference>
<dbReference type="PDB" id="6ZQC">
    <property type="method" value="EM"/>
    <property type="resolution" value="3.80 A"/>
    <property type="chains" value="Db=1-82"/>
</dbReference>
<dbReference type="PDB" id="6ZQD">
    <property type="method" value="EM"/>
    <property type="resolution" value="3.80 A"/>
    <property type="chains" value="Db=1-82"/>
</dbReference>
<dbReference type="PDB" id="6ZQE">
    <property type="method" value="EM"/>
    <property type="resolution" value="7.10 A"/>
    <property type="chains" value="Db=1-82"/>
</dbReference>
<dbReference type="PDB" id="6ZQF">
    <property type="method" value="EM"/>
    <property type="resolution" value="4.90 A"/>
    <property type="chains" value="Db=1-82"/>
</dbReference>
<dbReference type="PDB" id="6ZQG">
    <property type="method" value="EM"/>
    <property type="resolution" value="3.50 A"/>
    <property type="chains" value="Db=1-82"/>
</dbReference>
<dbReference type="PDB" id="6ZU9">
    <property type="method" value="EM"/>
    <property type="resolution" value="6.20 A"/>
    <property type="chains" value="f=1-82"/>
</dbReference>
<dbReference type="PDB" id="6ZVI">
    <property type="method" value="EM"/>
    <property type="resolution" value="3.00 A"/>
    <property type="chains" value="L=2-82"/>
</dbReference>
<dbReference type="PDB" id="7A1G">
    <property type="method" value="EM"/>
    <property type="resolution" value="3.00 A"/>
    <property type="chains" value="f=2-82"/>
</dbReference>
<dbReference type="PDB" id="7AJT">
    <property type="method" value="EM"/>
    <property type="resolution" value="4.60 A"/>
    <property type="chains" value="Db=1-82"/>
</dbReference>
<dbReference type="PDB" id="7AJU">
    <property type="method" value="EM"/>
    <property type="resolution" value="3.80 A"/>
    <property type="chains" value="Db=1-82"/>
</dbReference>
<dbReference type="PDB" id="7B7D">
    <property type="method" value="EM"/>
    <property type="resolution" value="3.30 A"/>
    <property type="chains" value="f=2-82"/>
</dbReference>
<dbReference type="PDB" id="7D4I">
    <property type="method" value="EM"/>
    <property type="resolution" value="4.00 A"/>
    <property type="chains" value="Sc=1-82"/>
</dbReference>
<dbReference type="PDB" id="7D5T">
    <property type="method" value="EM"/>
    <property type="resolution" value="6.00 A"/>
    <property type="chains" value="Sc=1-82"/>
</dbReference>
<dbReference type="PDB" id="7D63">
    <property type="method" value="EM"/>
    <property type="resolution" value="12.30 A"/>
    <property type="chains" value="Sc=1-82"/>
</dbReference>
<dbReference type="PDB" id="7MPI">
    <property type="method" value="EM"/>
    <property type="resolution" value="3.05 A"/>
    <property type="chains" value="Bb=2-82"/>
</dbReference>
<dbReference type="PDB" id="7MPJ">
    <property type="method" value="EM"/>
    <property type="resolution" value="2.70 A"/>
    <property type="chains" value="Bb=2-82"/>
</dbReference>
<dbReference type="PDB" id="7N8B">
    <property type="method" value="EM"/>
    <property type="resolution" value="3.05 A"/>
    <property type="chains" value="Bb=2-82"/>
</dbReference>
<dbReference type="PDB" id="7NRC">
    <property type="method" value="EM"/>
    <property type="resolution" value="3.90 A"/>
    <property type="chains" value="Sf=2-82"/>
</dbReference>
<dbReference type="PDB" id="7NRD">
    <property type="method" value="EM"/>
    <property type="resolution" value="4.36 A"/>
    <property type="chains" value="Sf=2-82"/>
</dbReference>
<dbReference type="PDB" id="7OSA">
    <property type="method" value="X-ray"/>
    <property type="resolution" value="3.00 A"/>
    <property type="chains" value="eS27=1-82"/>
</dbReference>
<dbReference type="PDB" id="7OSM">
    <property type="method" value="X-ray"/>
    <property type="resolution" value="3.00 A"/>
    <property type="chains" value="eS27=1-82"/>
</dbReference>
<dbReference type="PDB" id="7RR5">
    <property type="method" value="EM"/>
    <property type="resolution" value="3.23 A"/>
    <property type="chains" value="Sb=1-82"/>
</dbReference>
<dbReference type="PDB" id="7WTL">
    <property type="method" value="EM"/>
    <property type="resolution" value="3.30 A"/>
    <property type="chains" value="Sb=1-82"/>
</dbReference>
<dbReference type="PDB" id="7WTM">
    <property type="method" value="EM"/>
    <property type="resolution" value="3.50 A"/>
    <property type="chains" value="Sb=1-82"/>
</dbReference>
<dbReference type="PDB" id="7WTN">
    <property type="method" value="EM"/>
    <property type="resolution" value="3.40 A"/>
    <property type="chains" value="Sb=1-82"/>
</dbReference>
<dbReference type="PDB" id="7WTO">
    <property type="method" value="EM"/>
    <property type="resolution" value="3.50 A"/>
    <property type="chains" value="Sb=1-82"/>
</dbReference>
<dbReference type="PDB" id="7WTP">
    <property type="method" value="EM"/>
    <property type="resolution" value="3.80 A"/>
    <property type="chains" value="Sb=1-82"/>
</dbReference>
<dbReference type="PDB" id="7WTQ">
    <property type="method" value="EM"/>
    <property type="resolution" value="3.70 A"/>
    <property type="chains" value="Sb=1-82"/>
</dbReference>
<dbReference type="PDB" id="7WTR">
    <property type="method" value="EM"/>
    <property type="resolution" value="3.50 A"/>
    <property type="chains" value="Sb=1-82"/>
</dbReference>
<dbReference type="PDB" id="7ZPQ">
    <property type="method" value="EM"/>
    <property type="resolution" value="3.47 A"/>
    <property type="chains" value="Ab=2-82"/>
</dbReference>
<dbReference type="PDB" id="7ZRS">
    <property type="method" value="EM"/>
    <property type="resolution" value="4.80 A"/>
    <property type="chains" value="Ab=2-82"/>
</dbReference>
<dbReference type="PDB" id="7ZUW">
    <property type="method" value="EM"/>
    <property type="resolution" value="4.30 A"/>
    <property type="chains" value="Ab=2-82"/>
</dbReference>
<dbReference type="PDB" id="7ZUX">
    <property type="method" value="EM"/>
    <property type="resolution" value="2.50 A"/>
    <property type="chains" value="Db=2-82"/>
</dbReference>
<dbReference type="PDB" id="7ZW0">
    <property type="method" value="EM"/>
    <property type="resolution" value="2.40 A"/>
    <property type="chains" value="sf=1-82"/>
</dbReference>
<dbReference type="PDB" id="8BN3">
    <property type="method" value="EM"/>
    <property type="resolution" value="2.40 A"/>
    <property type="chains" value="D7=2-82"/>
</dbReference>
<dbReference type="PDB" id="8BQD">
    <property type="method" value="EM"/>
    <property type="resolution" value="3.90 A"/>
    <property type="chains" value="f=2-82"/>
</dbReference>
<dbReference type="PDB" id="8BQX">
    <property type="method" value="EM"/>
    <property type="resolution" value="3.80 A"/>
    <property type="chains" value="f=2-82"/>
</dbReference>
<dbReference type="PDB" id="8C00">
    <property type="method" value="EM"/>
    <property type="resolution" value="2.90 A"/>
    <property type="chains" value="f=1-82"/>
</dbReference>
<dbReference type="PDB" id="8C01">
    <property type="method" value="EM"/>
    <property type="resolution" value="2.70 A"/>
    <property type="chains" value="f=1-82"/>
</dbReference>
<dbReference type="PDB" id="8C83">
    <property type="method" value="EM"/>
    <property type="resolution" value="3.00 A"/>
    <property type="chains" value="f=1-82"/>
</dbReference>
<dbReference type="PDB" id="8CAH">
    <property type="method" value="EM"/>
    <property type="resolution" value="3.00 A"/>
    <property type="chains" value="f=1-82"/>
</dbReference>
<dbReference type="PDB" id="8CAS">
    <property type="method" value="EM"/>
    <property type="resolution" value="3.30 A"/>
    <property type="chains" value="f=1-82"/>
</dbReference>
<dbReference type="PDB" id="8CBJ">
    <property type="method" value="EM"/>
    <property type="resolution" value="3.80 A"/>
    <property type="chains" value="b=1-82"/>
</dbReference>
<dbReference type="PDB" id="8CCS">
    <property type="method" value="EM"/>
    <property type="resolution" value="1.97 A"/>
    <property type="chains" value="3=1-82"/>
</dbReference>
<dbReference type="PDB" id="8CDL">
    <property type="method" value="EM"/>
    <property type="resolution" value="2.72 A"/>
    <property type="chains" value="3=1-82"/>
</dbReference>
<dbReference type="PDB" id="8CDR">
    <property type="method" value="EM"/>
    <property type="resolution" value="2.04 A"/>
    <property type="chains" value="3=1-82"/>
</dbReference>
<dbReference type="PDB" id="8CEH">
    <property type="method" value="EM"/>
    <property type="resolution" value="2.05 A"/>
    <property type="chains" value="3=1-82"/>
</dbReference>
<dbReference type="PDB" id="8CF5">
    <property type="method" value="EM"/>
    <property type="resolution" value="2.71 A"/>
    <property type="chains" value="3=1-82"/>
</dbReference>
<dbReference type="PDB" id="8CG8">
    <property type="method" value="EM"/>
    <property type="resolution" value="2.57 A"/>
    <property type="chains" value="3=1-82"/>
</dbReference>
<dbReference type="PDB" id="8CGN">
    <property type="method" value="EM"/>
    <property type="resolution" value="2.28 A"/>
    <property type="chains" value="3=1-82"/>
</dbReference>
<dbReference type="PDB" id="8CIV">
    <property type="method" value="EM"/>
    <property type="resolution" value="2.47 A"/>
    <property type="chains" value="3=1-82"/>
</dbReference>
<dbReference type="PDB" id="8CKU">
    <property type="method" value="EM"/>
    <property type="resolution" value="3.11 A"/>
    <property type="chains" value="3=1-82"/>
</dbReference>
<dbReference type="PDB" id="8CMJ">
    <property type="method" value="EM"/>
    <property type="resolution" value="3.79 A"/>
    <property type="chains" value="3=1-82"/>
</dbReference>
<dbReference type="PDB" id="8EUB">
    <property type="method" value="EM"/>
    <property type="resolution" value="2.52 A"/>
    <property type="chains" value="Bb=1-82"/>
</dbReference>
<dbReference type="PDB" id="8EVP">
    <property type="method" value="EM"/>
    <property type="resolution" value="2.38 A"/>
    <property type="chains" value="Bb=1-82"/>
</dbReference>
<dbReference type="PDB" id="8EVQ">
    <property type="method" value="EM"/>
    <property type="resolution" value="2.72 A"/>
    <property type="chains" value="Bb=1-82"/>
</dbReference>
<dbReference type="PDB" id="8EVR">
    <property type="method" value="EM"/>
    <property type="resolution" value="2.87 A"/>
    <property type="chains" value="Bb=1-82"/>
</dbReference>
<dbReference type="PDB" id="8EVS">
    <property type="method" value="EM"/>
    <property type="resolution" value="2.62 A"/>
    <property type="chains" value="Bb=1-82"/>
</dbReference>
<dbReference type="PDB" id="8EVT">
    <property type="method" value="EM"/>
    <property type="resolution" value="2.20 A"/>
    <property type="chains" value="Bb=1-82"/>
</dbReference>
<dbReference type="PDB" id="8EWB">
    <property type="method" value="EM"/>
    <property type="resolution" value="2.87 A"/>
    <property type="chains" value="Bb=1-82"/>
</dbReference>
<dbReference type="PDB" id="8EWC">
    <property type="method" value="EM"/>
    <property type="resolution" value="2.45 A"/>
    <property type="chains" value="Bb=1-82"/>
</dbReference>
<dbReference type="PDB" id="8K2D">
    <property type="method" value="EM"/>
    <property type="resolution" value="3.20 A"/>
    <property type="chains" value="Sb=1-82"/>
</dbReference>
<dbReference type="PDB" id="8K82">
    <property type="method" value="EM"/>
    <property type="resolution" value="3.00 A"/>
    <property type="chains" value="Sb=1-82"/>
</dbReference>
<dbReference type="PDB" id="8P4V">
    <property type="method" value="X-ray"/>
    <property type="resolution" value="3.16 A"/>
    <property type="chains" value="c/d7=1-82"/>
</dbReference>
<dbReference type="PDB" id="8P9A">
    <property type="method" value="X-ray"/>
    <property type="resolution" value="2.90 A"/>
    <property type="chains" value="c/d7=1-82"/>
</dbReference>
<dbReference type="PDB" id="8T2X">
    <property type="method" value="EM"/>
    <property type="resolution" value="2.46 A"/>
    <property type="chains" value="Bb=1-82"/>
</dbReference>
<dbReference type="PDB" id="8T2Y">
    <property type="method" value="EM"/>
    <property type="resolution" value="2.20 A"/>
    <property type="chains" value="Bb=1-82"/>
</dbReference>
<dbReference type="PDB" id="8T2Z">
    <property type="method" value="EM"/>
    <property type="resolution" value="2.40 A"/>
    <property type="chains" value="Bb=1-82"/>
</dbReference>
<dbReference type="PDB" id="8T30">
    <property type="method" value="EM"/>
    <property type="resolution" value="2.88 A"/>
    <property type="chains" value="Bb=1-82"/>
</dbReference>
<dbReference type="PDB" id="8T3A">
    <property type="method" value="EM"/>
    <property type="resolution" value="2.86 A"/>
    <property type="chains" value="Bb=1-82"/>
</dbReference>
<dbReference type="PDB" id="8T3B">
    <property type="method" value="EM"/>
    <property type="resolution" value="3.08 A"/>
    <property type="chains" value="Bb=1-82"/>
</dbReference>
<dbReference type="PDB" id="8T3C">
    <property type="method" value="EM"/>
    <property type="resolution" value="3.86 A"/>
    <property type="chains" value="Bb=1-82"/>
</dbReference>
<dbReference type="PDB" id="8T3D">
    <property type="method" value="EM"/>
    <property type="resolution" value="2.95 A"/>
    <property type="chains" value="Bb=1-82"/>
</dbReference>
<dbReference type="PDB" id="8T3E">
    <property type="method" value="EM"/>
    <property type="resolution" value="3.04 A"/>
    <property type="chains" value="Bb=1-82"/>
</dbReference>
<dbReference type="PDB" id="8T3F">
    <property type="method" value="EM"/>
    <property type="resolution" value="3.09 A"/>
    <property type="chains" value="Bb=1-82"/>
</dbReference>
<dbReference type="PDB" id="8UT0">
    <property type="method" value="EM"/>
    <property type="resolution" value="3.22 A"/>
    <property type="chains" value="Sf=2-82"/>
</dbReference>
<dbReference type="PDB" id="8UTI">
    <property type="method" value="EM"/>
    <property type="resolution" value="3.13 A"/>
    <property type="chains" value="Sf=2-82"/>
</dbReference>
<dbReference type="PDB" id="8XU8">
    <property type="method" value="EM"/>
    <property type="resolution" value="3.40 A"/>
    <property type="chains" value="Sf=2-82"/>
</dbReference>
<dbReference type="PDB" id="8Y0U">
    <property type="method" value="EM"/>
    <property type="resolution" value="3.59 A"/>
    <property type="chains" value="Sb=1-82"/>
</dbReference>
<dbReference type="PDB" id="8YLD">
    <property type="method" value="EM"/>
    <property type="resolution" value="3.90 A"/>
    <property type="chains" value="Sf=2-82"/>
</dbReference>
<dbReference type="PDB" id="8YLR">
    <property type="method" value="EM"/>
    <property type="resolution" value="3.90 A"/>
    <property type="chains" value="Sf=2-82"/>
</dbReference>
<dbReference type="PDB" id="8Z70">
    <property type="method" value="EM"/>
    <property type="resolution" value="3.20 A"/>
    <property type="chains" value="Sf=2-82"/>
</dbReference>
<dbReference type="PDB" id="8Z71">
    <property type="method" value="EM"/>
    <property type="resolution" value="3.60 A"/>
    <property type="chains" value="Sf=2-82"/>
</dbReference>
<dbReference type="PDB" id="9F9S">
    <property type="method" value="EM"/>
    <property type="resolution" value="2.90 A"/>
    <property type="chains" value="RB/SB=1-82"/>
</dbReference>
<dbReference type="PDBsum" id="3J6X"/>
<dbReference type="PDBsum" id="3J6Y"/>
<dbReference type="PDBsum" id="3J77"/>
<dbReference type="PDBsum" id="3J78"/>
<dbReference type="PDBsum" id="4U3M"/>
<dbReference type="PDBsum" id="4U3N"/>
<dbReference type="PDBsum" id="4U3U"/>
<dbReference type="PDBsum" id="4U4N"/>
<dbReference type="PDBsum" id="4U4O"/>
<dbReference type="PDBsum" id="4U4Q"/>
<dbReference type="PDBsum" id="4U4R"/>
<dbReference type="PDBsum" id="4U4U"/>
<dbReference type="PDBsum" id="4U4Y"/>
<dbReference type="PDBsum" id="4U4Z"/>
<dbReference type="PDBsum" id="4U50"/>
<dbReference type="PDBsum" id="4U51"/>
<dbReference type="PDBsum" id="4U52"/>
<dbReference type="PDBsum" id="4U53"/>
<dbReference type="PDBsum" id="4U55"/>
<dbReference type="PDBsum" id="4U56"/>
<dbReference type="PDBsum" id="4U6F"/>
<dbReference type="PDBsum" id="4V6I"/>
<dbReference type="PDBsum" id="4V88"/>
<dbReference type="PDBsum" id="4V8Y"/>
<dbReference type="PDBsum" id="4V8Z"/>
<dbReference type="PDBsum" id="4V92"/>
<dbReference type="PDBsum" id="5DAT"/>
<dbReference type="PDBsum" id="5DC3"/>
<dbReference type="PDBsum" id="5DGE"/>
<dbReference type="PDBsum" id="5DGF"/>
<dbReference type="PDBsum" id="5DGV"/>
<dbReference type="PDBsum" id="5FCI"/>
<dbReference type="PDBsum" id="5FCJ"/>
<dbReference type="PDBsum" id="5I4L"/>
<dbReference type="PDBsum" id="5JUO"/>
<dbReference type="PDBsum" id="5JUP"/>
<dbReference type="PDBsum" id="5JUS"/>
<dbReference type="PDBsum" id="5JUT"/>
<dbReference type="PDBsum" id="5JUU"/>
<dbReference type="PDBsum" id="5LL6"/>
<dbReference type="PDBsum" id="5LYB"/>
<dbReference type="PDBsum" id="5M1J"/>
<dbReference type="PDBsum" id="5MC6"/>
<dbReference type="PDBsum" id="5MEI"/>
<dbReference type="PDBsum" id="5NDG"/>
<dbReference type="PDBsum" id="5NDV"/>
<dbReference type="PDBsum" id="5NDW"/>
<dbReference type="PDBsum" id="5OBM"/>
<dbReference type="PDBsum" id="5ON6"/>
<dbReference type="PDBsum" id="5TBW"/>
<dbReference type="PDBsum" id="5TGA"/>
<dbReference type="PDBsum" id="5TGM"/>
<dbReference type="PDBsum" id="5WYJ"/>
<dbReference type="PDBsum" id="5WYK"/>
<dbReference type="PDBsum" id="6EML"/>
<dbReference type="PDBsum" id="6FAI"/>
<dbReference type="PDBsum" id="6GQ1"/>
<dbReference type="PDBsum" id="6GQB"/>
<dbReference type="PDBsum" id="6GQV"/>
<dbReference type="PDBsum" id="6HHQ"/>
<dbReference type="PDBsum" id="6I7O"/>
<dbReference type="PDBsum" id="6KE6"/>
<dbReference type="PDBsum" id="6LQP"/>
<dbReference type="PDBsum" id="6LQQ"/>
<dbReference type="PDBsum" id="6LQR"/>
<dbReference type="PDBsum" id="6LQS"/>
<dbReference type="PDBsum" id="6LQT"/>
<dbReference type="PDBsum" id="6Q8Y"/>
<dbReference type="PDBsum" id="6RBD"/>
<dbReference type="PDBsum" id="6RBE"/>
<dbReference type="PDBsum" id="6S47"/>
<dbReference type="PDBsum" id="6SNT"/>
<dbReference type="PDBsum" id="6SV4"/>
<dbReference type="PDBsum" id="6T4Q"/>
<dbReference type="PDBsum" id="6T7I"/>
<dbReference type="PDBsum" id="6T7T"/>
<dbReference type="PDBsum" id="6T83"/>
<dbReference type="PDBsum" id="6TB3"/>
<dbReference type="PDBsum" id="6TNU"/>
<dbReference type="PDBsum" id="6WDR"/>
<dbReference type="PDBsum" id="6WOO"/>
<dbReference type="PDBsum" id="6XIQ"/>
<dbReference type="PDBsum" id="6XIR"/>
<dbReference type="PDBsum" id="6Y7C"/>
<dbReference type="PDBsum" id="6Z6J"/>
<dbReference type="PDBsum" id="6Z6K"/>
<dbReference type="PDBsum" id="6ZCE"/>
<dbReference type="PDBsum" id="6ZQA"/>
<dbReference type="PDBsum" id="6ZQB"/>
<dbReference type="PDBsum" id="6ZQC"/>
<dbReference type="PDBsum" id="6ZQD"/>
<dbReference type="PDBsum" id="6ZQE"/>
<dbReference type="PDBsum" id="6ZQF"/>
<dbReference type="PDBsum" id="6ZQG"/>
<dbReference type="PDBsum" id="6ZU9"/>
<dbReference type="PDBsum" id="6ZVI"/>
<dbReference type="PDBsum" id="7A1G"/>
<dbReference type="PDBsum" id="7AJT"/>
<dbReference type="PDBsum" id="7AJU"/>
<dbReference type="PDBsum" id="7B7D"/>
<dbReference type="PDBsum" id="7D4I"/>
<dbReference type="PDBsum" id="7D5T"/>
<dbReference type="PDBsum" id="7D63"/>
<dbReference type="PDBsum" id="7MPI"/>
<dbReference type="PDBsum" id="7MPJ"/>
<dbReference type="PDBsum" id="7N8B"/>
<dbReference type="PDBsum" id="7NRC"/>
<dbReference type="PDBsum" id="7NRD"/>
<dbReference type="PDBsum" id="7OSA"/>
<dbReference type="PDBsum" id="7OSM"/>
<dbReference type="PDBsum" id="7RR5"/>
<dbReference type="PDBsum" id="7WTL"/>
<dbReference type="PDBsum" id="7WTM"/>
<dbReference type="PDBsum" id="7WTN"/>
<dbReference type="PDBsum" id="7WTO"/>
<dbReference type="PDBsum" id="7WTP"/>
<dbReference type="PDBsum" id="7WTQ"/>
<dbReference type="PDBsum" id="7WTR"/>
<dbReference type="PDBsum" id="7ZPQ"/>
<dbReference type="PDBsum" id="7ZRS"/>
<dbReference type="PDBsum" id="7ZUW"/>
<dbReference type="PDBsum" id="7ZUX"/>
<dbReference type="PDBsum" id="7ZW0"/>
<dbReference type="PDBsum" id="8BN3"/>
<dbReference type="PDBsum" id="8BQD"/>
<dbReference type="PDBsum" id="8BQX"/>
<dbReference type="PDBsum" id="8C00"/>
<dbReference type="PDBsum" id="8C01"/>
<dbReference type="PDBsum" id="8C83"/>
<dbReference type="PDBsum" id="8CAH"/>
<dbReference type="PDBsum" id="8CAS"/>
<dbReference type="PDBsum" id="8CBJ"/>
<dbReference type="PDBsum" id="8CCS"/>
<dbReference type="PDBsum" id="8CDL"/>
<dbReference type="PDBsum" id="8CDR"/>
<dbReference type="PDBsum" id="8CEH"/>
<dbReference type="PDBsum" id="8CF5"/>
<dbReference type="PDBsum" id="8CG8"/>
<dbReference type="PDBsum" id="8CGN"/>
<dbReference type="PDBsum" id="8CIV"/>
<dbReference type="PDBsum" id="8CKU"/>
<dbReference type="PDBsum" id="8CMJ"/>
<dbReference type="PDBsum" id="8EUB"/>
<dbReference type="PDBsum" id="8EVP"/>
<dbReference type="PDBsum" id="8EVQ"/>
<dbReference type="PDBsum" id="8EVR"/>
<dbReference type="PDBsum" id="8EVS"/>
<dbReference type="PDBsum" id="8EVT"/>
<dbReference type="PDBsum" id="8EWB"/>
<dbReference type="PDBsum" id="8EWC"/>
<dbReference type="PDBsum" id="8K2D"/>
<dbReference type="PDBsum" id="8K82"/>
<dbReference type="PDBsum" id="8P4V"/>
<dbReference type="PDBsum" id="8P9A"/>
<dbReference type="PDBsum" id="8T2X"/>
<dbReference type="PDBsum" id="8T2Y"/>
<dbReference type="PDBsum" id="8T2Z"/>
<dbReference type="PDBsum" id="8T30"/>
<dbReference type="PDBsum" id="8T3A"/>
<dbReference type="PDBsum" id="8T3B"/>
<dbReference type="PDBsum" id="8T3C"/>
<dbReference type="PDBsum" id="8T3D"/>
<dbReference type="PDBsum" id="8T3E"/>
<dbReference type="PDBsum" id="8T3F"/>
<dbReference type="PDBsum" id="8UT0"/>
<dbReference type="PDBsum" id="8UTI"/>
<dbReference type="PDBsum" id="8XU8"/>
<dbReference type="PDBsum" id="8Y0U"/>
<dbReference type="PDBsum" id="8YLD"/>
<dbReference type="PDBsum" id="8YLR"/>
<dbReference type="PDBsum" id="8Z70"/>
<dbReference type="PDBsum" id="8Z71"/>
<dbReference type="PDBsum" id="9F9S"/>
<dbReference type="EMDB" id="EMD-0047"/>
<dbReference type="EMDB" id="EMD-0048"/>
<dbReference type="EMDB" id="EMD-0049"/>
<dbReference type="EMDB" id="EMD-0949"/>
<dbReference type="EMDB" id="EMD-0950"/>
<dbReference type="EMDB" id="EMD-0951"/>
<dbReference type="EMDB" id="EMD-0952"/>
<dbReference type="EMDB" id="EMD-0953"/>
<dbReference type="EMDB" id="EMD-10098"/>
<dbReference type="EMDB" id="EMD-10262"/>
<dbReference type="EMDB" id="EMD-10315"/>
<dbReference type="EMDB" id="EMD-10377"/>
<dbReference type="EMDB" id="EMD-10396"/>
<dbReference type="EMDB" id="EMD-10397"/>
<dbReference type="EMDB" id="EMD-10398"/>
<dbReference type="EMDB" id="EMD-10431"/>
<dbReference type="EMDB" id="EMD-10537"/>
<dbReference type="EMDB" id="EMD-10713"/>
<dbReference type="EMDB" id="EMD-11096"/>
<dbReference type="EMDB" id="EMD-11097"/>
<dbReference type="EMDB" id="EMD-11160"/>
<dbReference type="EMDB" id="EMD-11357"/>
<dbReference type="EMDB" id="EMD-11358"/>
<dbReference type="EMDB" id="EMD-11359"/>
<dbReference type="EMDB" id="EMD-11360"/>
<dbReference type="EMDB" id="EMD-11361"/>
<dbReference type="EMDB" id="EMD-11362"/>
<dbReference type="EMDB" id="EMD-11363"/>
<dbReference type="EMDB" id="EMD-11439"/>
<dbReference type="EMDB" id="EMD-11457"/>
<dbReference type="EMDB" id="EMD-11608"/>
<dbReference type="EMDB" id="EMD-11807"/>
<dbReference type="EMDB" id="EMD-11808"/>
<dbReference type="EMDB" id="EMD-12081"/>
<dbReference type="EMDB" id="EMD-12534"/>
<dbReference type="EMDB" id="EMD-12535"/>
<dbReference type="EMDB" id="EMD-14861"/>
<dbReference type="EMDB" id="EMD-14921"/>
<dbReference type="EMDB" id="EMD-14978"/>
<dbReference type="EMDB" id="EMD-14979"/>
<dbReference type="EMDB" id="EMD-14990"/>
<dbReference type="EMDB" id="EMD-16127"/>
<dbReference type="EMDB" id="EMD-16182"/>
<dbReference type="EMDB" id="EMD-16191"/>
<dbReference type="EMDB" id="EMD-16347"/>
<dbReference type="EMDB" id="EMD-16349"/>
<dbReference type="EMDB" id="EMD-16470"/>
<dbReference type="EMDB" id="EMD-16525"/>
<dbReference type="EMDB" id="EMD-16533"/>
<dbReference type="EMDB" id="EMD-16541"/>
<dbReference type="EMDB" id="EMD-16563"/>
<dbReference type="EMDB" id="EMD-16591"/>
<dbReference type="EMDB" id="EMD-16594"/>
<dbReference type="EMDB" id="EMD-16609"/>
<dbReference type="EMDB" id="EMD-16616"/>
<dbReference type="EMDB" id="EMD-16634"/>
<dbReference type="EMDB" id="EMD-16648"/>
<dbReference type="EMDB" id="EMD-16684"/>
<dbReference type="EMDB" id="EMD-16702"/>
<dbReference type="EMDB" id="EMD-16729"/>
<dbReference type="EMDB" id="EMD-21644"/>
<dbReference type="EMDB" id="EMD-21859"/>
<dbReference type="EMDB" id="EMD-22196"/>
<dbReference type="EMDB" id="EMD-22198"/>
<dbReference type="EMDB" id="EMD-23934"/>
<dbReference type="EMDB" id="EMD-23935"/>
<dbReference type="EMDB" id="EMD-24235"/>
<dbReference type="EMDB" id="EMD-24652"/>
<dbReference type="EMDB" id="EMD-28610"/>
<dbReference type="EMDB" id="EMD-28632"/>
<dbReference type="EMDB" id="EMD-28633"/>
<dbReference type="EMDB" id="EMD-28634"/>
<dbReference type="EMDB" id="EMD-28635"/>
<dbReference type="EMDB" id="EMD-28636"/>
<dbReference type="EMDB" id="EMD-28642"/>
<dbReference type="EMDB" id="EMD-28643"/>
<dbReference type="EMDB" id="EMD-30574"/>
<dbReference type="EMDB" id="EMD-30585"/>
<dbReference type="EMDB" id="EMD-30588"/>
<dbReference type="EMDB" id="EMD-32790"/>
<dbReference type="EMDB" id="EMD-32791"/>
<dbReference type="EMDB" id="EMD-32792"/>
<dbReference type="EMDB" id="EMD-32793"/>
<dbReference type="EMDB" id="EMD-32794"/>
<dbReference type="EMDB" id="EMD-32795"/>
<dbReference type="EMDB" id="EMD-32796"/>
<dbReference type="EMDB" id="EMD-3461"/>
<dbReference type="EMDB" id="EMD-36839"/>
<dbReference type="EMDB" id="EMD-36945"/>
<dbReference type="EMDB" id="EMD-38660"/>
<dbReference type="EMDB" id="EMD-40990"/>
<dbReference type="EMDB" id="EMD-40991"/>
<dbReference type="EMDB" id="EMD-40992"/>
<dbReference type="EMDB" id="EMD-40993"/>
<dbReference type="EMDB" id="EMD-40997"/>
<dbReference type="EMDB" id="EMD-40998"/>
<dbReference type="EMDB" id="EMD-40999"/>
<dbReference type="EMDB" id="EMD-41000"/>
<dbReference type="EMDB" id="EMD-41001"/>
<dbReference type="EMDB" id="EMD-41002"/>
<dbReference type="EMDB" id="EMD-4140"/>
<dbReference type="EMDB" id="EMD-4214"/>
<dbReference type="EMDB" id="EMD-42525"/>
<dbReference type="EMDB" id="EMD-42540"/>
<dbReference type="EMDB" id="EMD-4427"/>
<dbReference type="EMDB" id="EMD-4474"/>
<dbReference type="EMDB" id="EMD-4792"/>
<dbReference type="EMDB" id="EMD-4793"/>
<dbReference type="EMDB" id="EMD-50259"/>
<dbReference type="EMDB" id="EMD-6695"/>
<dbReference type="EMDB" id="EMD-6696"/>
<dbReference type="EMDB" id="EMD-9964"/>
<dbReference type="SMR" id="P35997"/>
<dbReference type="BioGRID" id="33981">
    <property type="interactions" value="738"/>
</dbReference>
<dbReference type="ComplexPortal" id="CPX-1599">
    <property type="entry name" value="40S cytosolic small ribosomal subunit"/>
</dbReference>
<dbReference type="FunCoup" id="P35997">
    <property type="interactions" value="1041"/>
</dbReference>
<dbReference type="IntAct" id="P35997">
    <property type="interactions" value="34"/>
</dbReference>
<dbReference type="MINT" id="P35997"/>
<dbReference type="STRING" id="4932.YKL156W"/>
<dbReference type="iPTMnet" id="P35997"/>
<dbReference type="PaxDb" id="4932-YKL156W"/>
<dbReference type="PeptideAtlas" id="P35997"/>
<dbReference type="TopDownProteomics" id="P35997"/>
<dbReference type="EnsemblFungi" id="YKL156W_mRNA">
    <property type="protein sequence ID" value="YKL156W"/>
    <property type="gene ID" value="YKL156W"/>
</dbReference>
<dbReference type="GeneID" id="853700"/>
<dbReference type="KEGG" id="sce:YKL156W"/>
<dbReference type="AGR" id="SGD:S000001639"/>
<dbReference type="SGD" id="S000001639">
    <property type="gene designation" value="RPS27A"/>
</dbReference>
<dbReference type="VEuPathDB" id="FungiDB:YKL156W"/>
<dbReference type="eggNOG" id="KOG1779">
    <property type="taxonomic scope" value="Eukaryota"/>
</dbReference>
<dbReference type="GeneTree" id="ENSGT00940000167938"/>
<dbReference type="HOGENOM" id="CLU_130128_3_0_1"/>
<dbReference type="InParanoid" id="P35997"/>
<dbReference type="OMA" id="IRSCARI"/>
<dbReference type="OrthoDB" id="5567124at2759"/>
<dbReference type="BioCyc" id="YEAST:G3O-31926-MONOMER"/>
<dbReference type="Reactome" id="R-SCE-156827">
    <property type="pathway name" value="L13a-mediated translational silencing of Ceruloplasmin expression"/>
</dbReference>
<dbReference type="Reactome" id="R-SCE-1799339">
    <property type="pathway name" value="SRP-dependent cotranslational protein targeting to membrane"/>
</dbReference>
<dbReference type="Reactome" id="R-SCE-72649">
    <property type="pathway name" value="Translation initiation complex formation"/>
</dbReference>
<dbReference type="Reactome" id="R-SCE-72689">
    <property type="pathway name" value="Formation of a pool of free 40S subunits"/>
</dbReference>
<dbReference type="Reactome" id="R-SCE-72695">
    <property type="pathway name" value="Formation of the ternary complex, and subsequently, the 43S complex"/>
</dbReference>
<dbReference type="Reactome" id="R-SCE-72702">
    <property type="pathway name" value="Ribosomal scanning and start codon recognition"/>
</dbReference>
<dbReference type="Reactome" id="R-SCE-72706">
    <property type="pathway name" value="GTP hydrolysis and joining of the 60S ribosomal subunit"/>
</dbReference>
<dbReference type="Reactome" id="R-SCE-975956">
    <property type="pathway name" value="Nonsense Mediated Decay (NMD) independent of the Exon Junction Complex (EJC)"/>
</dbReference>
<dbReference type="Reactome" id="R-SCE-975957">
    <property type="pathway name" value="Nonsense Mediated Decay (NMD) enhanced by the Exon Junction Complex (EJC)"/>
</dbReference>
<dbReference type="BioGRID-ORCS" id="853700">
    <property type="hits" value="0 hits in 10 CRISPR screens"/>
</dbReference>
<dbReference type="PRO" id="PR:P35997"/>
<dbReference type="Proteomes" id="UP000002311">
    <property type="component" value="Chromosome XI"/>
</dbReference>
<dbReference type="RNAct" id="P35997">
    <property type="molecule type" value="protein"/>
</dbReference>
<dbReference type="GO" id="GO:0005737">
    <property type="term" value="C:cytoplasm"/>
    <property type="evidence" value="ECO:0007005"/>
    <property type="project" value="SGD"/>
</dbReference>
<dbReference type="GO" id="GO:0005829">
    <property type="term" value="C:cytosol"/>
    <property type="evidence" value="ECO:0000304"/>
    <property type="project" value="Reactome"/>
</dbReference>
<dbReference type="GO" id="GO:0022627">
    <property type="term" value="C:cytosolic small ribosomal subunit"/>
    <property type="evidence" value="ECO:0000314"/>
    <property type="project" value="SGD"/>
</dbReference>
<dbReference type="GO" id="GO:0003723">
    <property type="term" value="F:RNA binding"/>
    <property type="evidence" value="ECO:0000318"/>
    <property type="project" value="GO_Central"/>
</dbReference>
<dbReference type="GO" id="GO:0003735">
    <property type="term" value="F:structural constituent of ribosome"/>
    <property type="evidence" value="ECO:0000314"/>
    <property type="project" value="SGD"/>
</dbReference>
<dbReference type="GO" id="GO:0008270">
    <property type="term" value="F:zinc ion binding"/>
    <property type="evidence" value="ECO:0007669"/>
    <property type="project" value="UniProtKB-KW"/>
</dbReference>
<dbReference type="GO" id="GO:0000462">
    <property type="term" value="P:maturation of SSU-rRNA from tricistronic rRNA transcript (SSU-rRNA, 5.8S rRNA, LSU-rRNA)"/>
    <property type="evidence" value="ECO:0000316"/>
    <property type="project" value="SGD"/>
</dbReference>
<dbReference type="GO" id="GO:0000028">
    <property type="term" value="P:ribosomal small subunit assembly"/>
    <property type="evidence" value="ECO:0000315"/>
    <property type="project" value="SGD"/>
</dbReference>
<dbReference type="GO" id="GO:0006412">
    <property type="term" value="P:translation"/>
    <property type="evidence" value="ECO:0007669"/>
    <property type="project" value="InterPro"/>
</dbReference>
<dbReference type="FunFam" id="2.20.25.100:FF:000001">
    <property type="entry name" value="40S ribosomal protein S27"/>
    <property type="match status" value="1"/>
</dbReference>
<dbReference type="Gene3D" id="2.20.25.100">
    <property type="entry name" value="Zn-binding ribosomal proteins"/>
    <property type="match status" value="1"/>
</dbReference>
<dbReference type="HAMAP" id="MF_00371">
    <property type="entry name" value="Ribosomal_eS27"/>
    <property type="match status" value="1"/>
</dbReference>
<dbReference type="InterPro" id="IPR000592">
    <property type="entry name" value="Ribosomal_eS27"/>
</dbReference>
<dbReference type="InterPro" id="IPR023407">
    <property type="entry name" value="Ribosomal_eS27_Zn-bd_dom_sf"/>
</dbReference>
<dbReference type="InterPro" id="IPR011332">
    <property type="entry name" value="Ribosomal_zn-bd"/>
</dbReference>
<dbReference type="PANTHER" id="PTHR11594">
    <property type="entry name" value="40S RIBOSOMAL PROTEIN S27"/>
    <property type="match status" value="1"/>
</dbReference>
<dbReference type="Pfam" id="PF01667">
    <property type="entry name" value="Ribosomal_S27e"/>
    <property type="match status" value="1"/>
</dbReference>
<dbReference type="SUPFAM" id="SSF57829">
    <property type="entry name" value="Zn-binding ribosomal proteins"/>
    <property type="match status" value="1"/>
</dbReference>
<dbReference type="PROSITE" id="PS01168">
    <property type="entry name" value="RIBOSOMAL_S27E"/>
    <property type="match status" value="1"/>
</dbReference>
<evidence type="ECO:0000255" key="1"/>
<evidence type="ECO:0000269" key="2">
    <source>
    </source>
</evidence>
<evidence type="ECO:0000269" key="3">
    <source>
    </source>
</evidence>
<evidence type="ECO:0000269" key="4">
    <source>
    </source>
</evidence>
<evidence type="ECO:0000269" key="5">
    <source>
    </source>
</evidence>
<evidence type="ECO:0000269" key="6">
    <source>
    </source>
</evidence>
<evidence type="ECO:0000303" key="7">
    <source>
    </source>
</evidence>
<evidence type="ECO:0000303" key="8">
    <source>
    </source>
</evidence>
<evidence type="ECO:0000305" key="9"/>
<evidence type="ECO:0000305" key="10">
    <source>
    </source>
</evidence>
<evidence type="ECO:0000305" key="11">
    <source>
    </source>
</evidence>
<evidence type="ECO:0007829" key="12">
    <source>
        <dbReference type="PDB" id="6ZVI"/>
    </source>
</evidence>
<evidence type="ECO:0007829" key="13">
    <source>
        <dbReference type="PDB" id="8C00"/>
    </source>
</evidence>
<evidence type="ECO:0007829" key="14">
    <source>
        <dbReference type="PDB" id="8C01"/>
    </source>
</evidence>
<evidence type="ECO:0007829" key="15">
    <source>
        <dbReference type="PDB" id="8CAS"/>
    </source>
</evidence>
<comment type="function">
    <text evidence="10">Component of the ribosome, a large ribonucleoprotein complex responsible for the synthesis of proteins in the cell. The small ribosomal subunit (SSU) binds messenger RNAs (mRNAs) and translates the encoded message by selecting cognate aminoacyl-transfer RNA (tRNA) molecules. The large subunit (LSU) contains the ribosomal catalytic site termed the peptidyl transferase center (PTC), which catalyzes the formation of peptide bonds, thereby polymerizing the amino acids delivered by tRNAs into a polypeptide chain. The nascent polypeptides leave the ribosome through a tunnel in the LSU and interact with protein factors that function in enzymatic processing, targeting, and the membrane insertion of nascent chains at the exit of the ribosomal tunnel.</text>
</comment>
<comment type="cofactor">
    <cofactor evidence="9">
        <name>Zn(2+)</name>
        <dbReference type="ChEBI" id="CHEBI:29105"/>
    </cofactor>
    <text evidence="9">Binds 1 zinc ion per subunit.</text>
</comment>
<comment type="subunit">
    <text evidence="5 11">Component of the small ribosomal subunit (SSU). Mature yeast ribosomes consist of a small (40S) and a large (60S) subunit. The 40S small subunit contains 1 molecule of ribosomal RNA (18S rRNA) and 33 different proteins (encoded by 57 genes). The large 60S subunit contains 3 rRNA molecules (25S, 5.8S and 5S rRNA) and 46 different proteins (encoded by 81 genes) (PubMed:22096102, PubMed:9559554).</text>
</comment>
<comment type="subcellular location">
    <subcellularLocation>
        <location evidence="3 5">Cytoplasm</location>
    </subcellularLocation>
</comment>
<comment type="PTM">
    <text evidence="2">The N-terminus is not modified.</text>
</comment>
<comment type="miscellaneous">
    <text evidence="4">Present with 43300 molecules/cell in log phase SD medium.</text>
</comment>
<comment type="miscellaneous">
    <text evidence="9">There are 2 genes for eS27 in yeast.</text>
</comment>
<comment type="similarity">
    <text evidence="9">Belongs to the eukaryotic ribosomal protein eS27 family.</text>
</comment>
<reference key="1">
    <citation type="journal article" date="1994" name="Yeast">
        <title>DNA sequencing of a 36.2 kb fragment located between the FAS1 and LAP loci of chromosome XI of Saccharomyces cerevisiae.</title>
        <authorList>
            <person name="Vandenbol M."/>
            <person name="Bolle P.-A."/>
            <person name="Dion C."/>
            <person name="Portetelle D."/>
            <person name="Hilger F."/>
        </authorList>
    </citation>
    <scope>NUCLEOTIDE SEQUENCE [GENOMIC DNA]</scope>
    <source>
        <strain>ATCC 204508 / S288c</strain>
    </source>
</reference>
<reference key="2">
    <citation type="journal article" date="1994" name="Nature">
        <title>Complete DNA sequence of yeast chromosome XI.</title>
        <authorList>
            <person name="Dujon B."/>
            <person name="Alexandraki D."/>
            <person name="Andre B."/>
            <person name="Ansorge W."/>
            <person name="Baladron V."/>
            <person name="Ballesta J.P.G."/>
            <person name="Banrevi A."/>
            <person name="Bolle P.-A."/>
            <person name="Bolotin-Fukuhara M."/>
            <person name="Bossier P."/>
            <person name="Bou G."/>
            <person name="Boyer J."/>
            <person name="Buitrago M.J."/>
            <person name="Cheret G."/>
            <person name="Colleaux L."/>
            <person name="Daignan-Fornier B."/>
            <person name="del Rey F."/>
            <person name="Dion C."/>
            <person name="Domdey H."/>
            <person name="Duesterhoeft A."/>
            <person name="Duesterhus S."/>
            <person name="Entian K.-D."/>
            <person name="Erfle H."/>
            <person name="Esteban P.F."/>
            <person name="Feldmann H."/>
            <person name="Fernandes L."/>
            <person name="Fobo G.M."/>
            <person name="Fritz C."/>
            <person name="Fukuhara H."/>
            <person name="Gabel C."/>
            <person name="Gaillon L."/>
            <person name="Garcia-Cantalejo J.M."/>
            <person name="Garcia-Ramirez J.J."/>
            <person name="Gent M.E."/>
            <person name="Ghazvini M."/>
            <person name="Goffeau A."/>
            <person name="Gonzalez A."/>
            <person name="Grothues D."/>
            <person name="Guerreiro P."/>
            <person name="Hegemann J.H."/>
            <person name="Hewitt N."/>
            <person name="Hilger F."/>
            <person name="Hollenberg C.P."/>
            <person name="Horaitis O."/>
            <person name="Indge K.J."/>
            <person name="Jacquier A."/>
            <person name="James C.M."/>
            <person name="Jauniaux J.-C."/>
            <person name="Jimenez A."/>
            <person name="Keuchel H."/>
            <person name="Kirchrath L."/>
            <person name="Kleine K."/>
            <person name="Koetter P."/>
            <person name="Legrain P."/>
            <person name="Liebl S."/>
            <person name="Louis E.J."/>
            <person name="Maia e Silva A."/>
            <person name="Marck C."/>
            <person name="Monnier A.-L."/>
            <person name="Moestl D."/>
            <person name="Mueller S."/>
            <person name="Obermaier B."/>
            <person name="Oliver S.G."/>
            <person name="Pallier C."/>
            <person name="Pascolo S."/>
            <person name="Pfeiffer F."/>
            <person name="Philippsen P."/>
            <person name="Planta R.J."/>
            <person name="Pohl F.M."/>
            <person name="Pohl T.M."/>
            <person name="Poehlmann R."/>
            <person name="Portetelle D."/>
            <person name="Purnelle B."/>
            <person name="Puzos V."/>
            <person name="Ramezani Rad M."/>
            <person name="Rasmussen S.W."/>
            <person name="Remacha M.A."/>
            <person name="Revuelta J.L."/>
            <person name="Richard G.-F."/>
            <person name="Rieger M."/>
            <person name="Rodrigues-Pousada C."/>
            <person name="Rose M."/>
            <person name="Rupp T."/>
            <person name="Santos M.A."/>
            <person name="Schwager C."/>
            <person name="Sensen C."/>
            <person name="Skala J."/>
            <person name="Soares H."/>
            <person name="Sor F."/>
            <person name="Stegemann J."/>
            <person name="Tettelin H."/>
            <person name="Thierry A."/>
            <person name="Tzermia M."/>
            <person name="Urrestarazu L.A."/>
            <person name="van Dyck L."/>
            <person name="van Vliet-Reedijk J.C."/>
            <person name="Valens M."/>
            <person name="Vandenbol M."/>
            <person name="Vilela C."/>
            <person name="Vissers S."/>
            <person name="von Wettstein D."/>
            <person name="Voss H."/>
            <person name="Wiemann S."/>
            <person name="Xu G."/>
            <person name="Zimmermann J."/>
            <person name="Haasemann M."/>
            <person name="Becker I."/>
            <person name="Mewes H.-W."/>
        </authorList>
    </citation>
    <scope>NUCLEOTIDE SEQUENCE [LARGE SCALE GENOMIC DNA]</scope>
    <source>
        <strain>ATCC 204508 / S288c</strain>
    </source>
</reference>
<reference key="3">
    <citation type="journal article" date="2014" name="G3 (Bethesda)">
        <title>The reference genome sequence of Saccharomyces cerevisiae: Then and now.</title>
        <authorList>
            <person name="Engel S.R."/>
            <person name="Dietrich F.S."/>
            <person name="Fisk D.G."/>
            <person name="Binkley G."/>
            <person name="Balakrishnan R."/>
            <person name="Costanzo M.C."/>
            <person name="Dwight S.S."/>
            <person name="Hitz B.C."/>
            <person name="Karra K."/>
            <person name="Nash R.S."/>
            <person name="Weng S."/>
            <person name="Wong E.D."/>
            <person name="Lloyd P."/>
            <person name="Skrzypek M.S."/>
            <person name="Miyasato S.R."/>
            <person name="Simison M."/>
            <person name="Cherry J.M."/>
        </authorList>
    </citation>
    <scope>GENOME REANNOTATION</scope>
    <source>
        <strain>ATCC 204508 / S288c</strain>
    </source>
</reference>
<reference key="4">
    <citation type="journal article" date="1998" name="Yeast">
        <title>The list of cytoplasmic ribosomal proteins of Saccharomyces cerevisiae.</title>
        <authorList>
            <person name="Planta R.J."/>
            <person name="Mager W.H."/>
        </authorList>
    </citation>
    <scope>NOMENCLATURE</scope>
    <scope>SUBUNIT</scope>
</reference>
<reference key="5">
    <citation type="journal article" date="1999" name="J. Biol. Chem.">
        <title>The action of N-terminal acetyltransferases on yeast ribosomal proteins.</title>
        <authorList>
            <person name="Arnold R.J."/>
            <person name="Polevoda B."/>
            <person name="Reilly J.P."/>
            <person name="Sherman F."/>
        </authorList>
    </citation>
    <scope>ANALYSIS OF N-TERMINUS</scope>
</reference>
<reference key="6">
    <citation type="journal article" date="2003" name="Nature">
        <title>Global analysis of protein localization in budding yeast.</title>
        <authorList>
            <person name="Huh W.-K."/>
            <person name="Falvo J.V."/>
            <person name="Gerke L.C."/>
            <person name="Carroll A.S."/>
            <person name="Howson R.W."/>
            <person name="Weissman J.S."/>
            <person name="O'Shea E.K."/>
        </authorList>
    </citation>
    <scope>SUBCELLULAR LOCATION [LARGE SCALE ANALYSIS]</scope>
</reference>
<reference key="7">
    <citation type="journal article" date="2003" name="Nature">
        <title>Global analysis of protein expression in yeast.</title>
        <authorList>
            <person name="Ghaemmaghami S."/>
            <person name="Huh W.-K."/>
            <person name="Bower K."/>
            <person name="Howson R.W."/>
            <person name="Belle A."/>
            <person name="Dephoure N."/>
            <person name="O'Shea E.K."/>
            <person name="Weissman J.S."/>
        </authorList>
    </citation>
    <scope>LEVEL OF PROTEIN EXPRESSION [LARGE SCALE ANALYSIS]</scope>
</reference>
<reference key="8">
    <citation type="journal article" date="2012" name="Biochemistry">
        <title>Identification of methylated proteins in the yeast small ribosomal subunit: a role for SPOUT methyltransferases in protein arginine methylation.</title>
        <authorList>
            <person name="Young B.D."/>
            <person name="Weiss D.I."/>
            <person name="Zurita-Lopez C.I."/>
            <person name="Webb K.J."/>
            <person name="Clarke S.G."/>
            <person name="McBride A.E."/>
        </authorList>
    </citation>
    <scope>METHYLATION AT CYS-40</scope>
</reference>
<reference key="9">
    <citation type="journal article" date="2014" name="Curr. Opin. Struct. Biol.">
        <title>A new system for naming ribosomal proteins.</title>
        <authorList>
            <person name="Ban N."/>
            <person name="Beckmann R."/>
            <person name="Cate J.H.D."/>
            <person name="Dinman J.D."/>
            <person name="Dragon F."/>
            <person name="Ellis S.R."/>
            <person name="Lafontaine D.L.J."/>
            <person name="Lindahl L."/>
            <person name="Liljas A."/>
            <person name="Lipton J.M."/>
            <person name="McAlear M.A."/>
            <person name="Moore P.B."/>
            <person name="Noller H.F."/>
            <person name="Ortega J."/>
            <person name="Panse V.G."/>
            <person name="Ramakrishnan V."/>
            <person name="Spahn C.M.T."/>
            <person name="Steitz T.A."/>
            <person name="Tchorzewski M."/>
            <person name="Tollervey D."/>
            <person name="Warren A.J."/>
            <person name="Williamson J.R."/>
            <person name="Wilson D."/>
            <person name="Yonath A."/>
            <person name="Yusupov M."/>
        </authorList>
    </citation>
    <scope>NOMENCLATURE</scope>
</reference>
<reference key="10">
    <citation type="journal article" date="2010" name="Proc. Natl. Acad. Sci. U.S.A.">
        <title>Cryo-EM structure and rRNA model of a translating eukaryotic 80S ribosome at 5.5-A resolution.</title>
        <authorList>
            <person name="Armache J.P."/>
            <person name="Jarasch A."/>
            <person name="Anger A.M."/>
            <person name="Villa E."/>
            <person name="Becker T."/>
            <person name="Bhushan S."/>
            <person name="Jossinet F."/>
            <person name="Habeck M."/>
            <person name="Dindar G."/>
            <person name="Franckenberg S."/>
            <person name="Marquez V."/>
            <person name="Mielke T."/>
            <person name="Thomm M."/>
            <person name="Berninghausen O."/>
            <person name="Beatrix B."/>
            <person name="Soding J."/>
            <person name="Westhof E."/>
            <person name="Wilson D.N."/>
            <person name="Beckmann R."/>
        </authorList>
    </citation>
    <scope>STRUCTURE BY ELECTRON MICROSCOPY</scope>
</reference>
<reference key="11">
    <citation type="journal article" date="2011" name="Science">
        <title>The structure of the eukaryotic ribosome at 3.0 A resolution.</title>
        <authorList>
            <person name="Ben-Shem A."/>
            <person name="Garreau de Loubresse N."/>
            <person name="Melnikov S."/>
            <person name="Jenner L."/>
            <person name="Yusupova G."/>
            <person name="Yusupov M."/>
        </authorList>
    </citation>
    <scope>X-RAY CRYSTALLOGRAPHY (3.00 ANGSTROMS) OF 80S RIBOSOME</scope>
    <scope>SUBUNIT</scope>
    <scope>SUBCELLULAR LOCATION</scope>
</reference>
<reference key="12">
    <citation type="journal article" date="2013" name="Science">
        <title>Molecular architecture of a eukaryotic translational initiation complex.</title>
        <authorList>
            <person name="Fernandez I.S."/>
            <person name="Bai X.C."/>
            <person name="Hussain T."/>
            <person name="Kelley A.C."/>
            <person name="Lorsch J.R."/>
            <person name="Ramakrishnan V."/>
            <person name="Scheres S.H."/>
        </authorList>
    </citation>
    <scope>STRUCTURE BY ELECTRON MICROSCOPY (4.30 ANGSTROMS)</scope>
</reference>
<sequence length="82" mass="8879">MVLVQDLLHPTAASEARKHKLKTLVQGPRSYFLDVKCPGCLNITTVFSHAQTAVTCESCSTILCTPTGGKAKLSEGTSFRRK</sequence>
<name>RS27A_YEAST</name>
<feature type="chain" id="PRO_0000149066" description="Small ribosomal subunit protein eS27A">
    <location>
        <begin position="1"/>
        <end position="82"/>
    </location>
</feature>
<feature type="zinc finger region" description="C4-type" evidence="1">
    <location>
        <begin position="37"/>
        <end position="59"/>
    </location>
</feature>
<feature type="modified residue" description="S-methylcysteine" evidence="6">
    <location>
        <position position="40"/>
    </location>
</feature>
<feature type="strand" evidence="14">
    <location>
        <begin position="7"/>
        <end position="9"/>
    </location>
</feature>
<feature type="helix" evidence="14">
    <location>
        <begin position="12"/>
        <end position="16"/>
    </location>
</feature>
<feature type="turn" evidence="14">
    <location>
        <begin position="20"/>
        <end position="22"/>
    </location>
</feature>
<feature type="strand" evidence="14">
    <location>
        <begin position="23"/>
        <end position="25"/>
    </location>
</feature>
<feature type="strand" evidence="14">
    <location>
        <begin position="32"/>
        <end position="36"/>
    </location>
</feature>
<feature type="strand" evidence="13">
    <location>
        <begin position="38"/>
        <end position="40"/>
    </location>
</feature>
<feature type="strand" evidence="14">
    <location>
        <begin position="44"/>
        <end position="47"/>
    </location>
</feature>
<feature type="strand" evidence="15">
    <location>
        <begin position="54"/>
        <end position="56"/>
    </location>
</feature>
<feature type="strand" evidence="14">
    <location>
        <begin position="57"/>
        <end position="60"/>
    </location>
</feature>
<feature type="strand" evidence="12">
    <location>
        <begin position="63"/>
        <end position="65"/>
    </location>
</feature>
<feature type="strand" evidence="14">
    <location>
        <begin position="68"/>
        <end position="70"/>
    </location>
</feature>
<feature type="strand" evidence="14">
    <location>
        <begin position="78"/>
        <end position="81"/>
    </location>
</feature>